<evidence type="ECO:0000250" key="1"/>
<evidence type="ECO:0000250" key="2">
    <source>
        <dbReference type="UniProtKB" id="Q10586"/>
    </source>
</evidence>
<evidence type="ECO:0000255" key="3">
    <source>
        <dbReference type="PROSITE-ProRule" id="PRU00978"/>
    </source>
</evidence>
<evidence type="ECO:0000256" key="4">
    <source>
        <dbReference type="SAM" id="MobiDB-lite"/>
    </source>
</evidence>
<evidence type="ECO:0000305" key="5"/>
<keyword id="KW-0010">Activator</keyword>
<keyword id="KW-0090">Biological rhythms</keyword>
<keyword id="KW-0238">DNA-binding</keyword>
<keyword id="KW-0539">Nucleus</keyword>
<keyword id="KW-0597">Phosphoprotein</keyword>
<keyword id="KW-1185">Reference proteome</keyword>
<keyword id="KW-0804">Transcription</keyword>
<keyword id="KW-0805">Transcription regulation</keyword>
<gene>
    <name type="primary">DBP</name>
</gene>
<protein>
    <recommendedName>
        <fullName>D site-binding protein</fullName>
    </recommendedName>
    <alternativeName>
        <fullName>Albumin D box-binding protein</fullName>
    </alternativeName>
    <alternativeName>
        <fullName>Albumin D-element-binding protein</fullName>
    </alternativeName>
</protein>
<proteinExistence type="evidence at transcript level"/>
<sequence length="325" mass="34322">MARPVSERTPAPLLLGGPTGAPPGGGALLGLRSLLQGTSKPKEPTSCLLKEKERKASPPAATVPGPGLETAGPADASAGAVVGGGSPRGRPGAAPGPGLLAPLLWERTLPFGDVEYVDLDAFLLEHGLPPSPPPPGGPSPAPSPVRTPAPSPRPGSCGSASPRSSPGHAPARAALGAAGGHRAGLTSRDTPSPVDPDTVEVLMTFEPDPADLALSSIPGHETFDPRRHRFSEEELKPQPIMKKARKIQVPEEQKDEKYWSRRYKNNEAAKRSRDARRLKENQISVRAAFLEKENALLRQEVVAVRQELSHYRAVLSRYQAQHGAL</sequence>
<comment type="function">
    <text evidence="1">This transcriptional activator recognizes and binds to the sequence 5'-RTTAYGTAAY-3' found in the promoter of genes such as albumin, CYP2A4 and CYP2A5. It is not essential for circadian rhythm generation, but modulates important clock output genes. May be a direct target for regulation by the circadian pacemaker component clock. May affect circadian period and sleep regulation (By similarity).</text>
</comment>
<comment type="subunit">
    <text evidence="1">Binds DNA as a homodimer or a heterodimer. Can form a heterodimer with TEF (By similarity).</text>
</comment>
<comment type="subcellular location">
    <subcellularLocation>
        <location>Nucleus</location>
    </subcellularLocation>
</comment>
<comment type="similarity">
    <text evidence="5">Belongs to the bZIP family. PAR subfamily.</text>
</comment>
<dbReference type="EMBL" id="BC108134">
    <property type="protein sequence ID" value="AAI08135.2"/>
    <property type="molecule type" value="mRNA"/>
</dbReference>
<dbReference type="RefSeq" id="NP_001032522.1">
    <property type="nucleotide sequence ID" value="NM_001037445.2"/>
</dbReference>
<dbReference type="SMR" id="Q32PF6"/>
<dbReference type="FunCoup" id="Q32PF6">
    <property type="interactions" value="10"/>
</dbReference>
<dbReference type="STRING" id="9913.ENSBTAP00000008883"/>
<dbReference type="PaxDb" id="9913-ENSBTAP00000008883"/>
<dbReference type="GeneID" id="503577"/>
<dbReference type="KEGG" id="bta:503577"/>
<dbReference type="CTD" id="1628"/>
<dbReference type="VEuPathDB" id="HostDB:ENSBTAG00000006754"/>
<dbReference type="eggNOG" id="KOG3119">
    <property type="taxonomic scope" value="Eukaryota"/>
</dbReference>
<dbReference type="HOGENOM" id="CLU_051922_0_0_1"/>
<dbReference type="InParanoid" id="Q32PF6"/>
<dbReference type="OMA" id="EYEHPSS"/>
<dbReference type="OrthoDB" id="6022300at2759"/>
<dbReference type="TreeFam" id="TF315869"/>
<dbReference type="Proteomes" id="UP000009136">
    <property type="component" value="Chromosome 18"/>
</dbReference>
<dbReference type="Bgee" id="ENSBTAG00000006754">
    <property type="expression patterns" value="Expressed in retina and 107 other cell types or tissues"/>
</dbReference>
<dbReference type="GO" id="GO:0005634">
    <property type="term" value="C:nucleus"/>
    <property type="evidence" value="ECO:0000318"/>
    <property type="project" value="GO_Central"/>
</dbReference>
<dbReference type="GO" id="GO:0000981">
    <property type="term" value="F:DNA-binding transcription factor activity, RNA polymerase II-specific"/>
    <property type="evidence" value="ECO:0000318"/>
    <property type="project" value="GO_Central"/>
</dbReference>
<dbReference type="GO" id="GO:0000978">
    <property type="term" value="F:RNA polymerase II cis-regulatory region sequence-specific DNA binding"/>
    <property type="evidence" value="ECO:0000318"/>
    <property type="project" value="GO_Central"/>
</dbReference>
<dbReference type="GO" id="GO:0006357">
    <property type="term" value="P:regulation of transcription by RNA polymerase II"/>
    <property type="evidence" value="ECO:0000318"/>
    <property type="project" value="GO_Central"/>
</dbReference>
<dbReference type="GO" id="GO:0048511">
    <property type="term" value="P:rhythmic process"/>
    <property type="evidence" value="ECO:0007669"/>
    <property type="project" value="UniProtKB-KW"/>
</dbReference>
<dbReference type="CDD" id="cd14695">
    <property type="entry name" value="bZIP_HLF"/>
    <property type="match status" value="1"/>
</dbReference>
<dbReference type="FunFam" id="1.20.5.170:FF:000007">
    <property type="entry name" value="hepatic leukemia factor isoform X2"/>
    <property type="match status" value="1"/>
</dbReference>
<dbReference type="Gene3D" id="1.20.5.170">
    <property type="match status" value="1"/>
</dbReference>
<dbReference type="InterPro" id="IPR004827">
    <property type="entry name" value="bZIP"/>
</dbReference>
<dbReference type="InterPro" id="IPR046347">
    <property type="entry name" value="bZIP_sf"/>
</dbReference>
<dbReference type="InterPro" id="IPR040223">
    <property type="entry name" value="PAR_bZIP"/>
</dbReference>
<dbReference type="PANTHER" id="PTHR11988:SF7">
    <property type="entry name" value="D SITE-BINDING PROTEIN"/>
    <property type="match status" value="1"/>
</dbReference>
<dbReference type="PANTHER" id="PTHR11988">
    <property type="entry name" value="THYROTROPH EMBRYONIC FACTOR RELATED"/>
    <property type="match status" value="1"/>
</dbReference>
<dbReference type="Pfam" id="PF07716">
    <property type="entry name" value="bZIP_2"/>
    <property type="match status" value="1"/>
</dbReference>
<dbReference type="SMART" id="SM00338">
    <property type="entry name" value="BRLZ"/>
    <property type="match status" value="1"/>
</dbReference>
<dbReference type="SUPFAM" id="SSF57959">
    <property type="entry name" value="Leucine zipper domain"/>
    <property type="match status" value="1"/>
</dbReference>
<dbReference type="PROSITE" id="PS50217">
    <property type="entry name" value="BZIP"/>
    <property type="match status" value="1"/>
</dbReference>
<organism>
    <name type="scientific">Bos taurus</name>
    <name type="common">Bovine</name>
    <dbReference type="NCBI Taxonomy" id="9913"/>
    <lineage>
        <taxon>Eukaryota</taxon>
        <taxon>Metazoa</taxon>
        <taxon>Chordata</taxon>
        <taxon>Craniata</taxon>
        <taxon>Vertebrata</taxon>
        <taxon>Euteleostomi</taxon>
        <taxon>Mammalia</taxon>
        <taxon>Eutheria</taxon>
        <taxon>Laurasiatheria</taxon>
        <taxon>Artiodactyla</taxon>
        <taxon>Ruminantia</taxon>
        <taxon>Pecora</taxon>
        <taxon>Bovidae</taxon>
        <taxon>Bovinae</taxon>
        <taxon>Bos</taxon>
    </lineage>
</organism>
<accession>Q32PF6</accession>
<name>DBP_BOVIN</name>
<feature type="chain" id="PRO_0000226720" description="D site-binding protein">
    <location>
        <begin position="1"/>
        <end position="325"/>
    </location>
</feature>
<feature type="domain" description="bZIP" evidence="3">
    <location>
        <begin position="255"/>
        <end position="318"/>
    </location>
</feature>
<feature type="region of interest" description="Disordered" evidence="4">
    <location>
        <begin position="1"/>
        <end position="100"/>
    </location>
</feature>
<feature type="region of interest" description="Disordered" evidence="4">
    <location>
        <begin position="124"/>
        <end position="198"/>
    </location>
</feature>
<feature type="region of interest" description="Disordered" evidence="4">
    <location>
        <begin position="212"/>
        <end position="255"/>
    </location>
</feature>
<feature type="region of interest" description="Basic motif" evidence="3">
    <location>
        <begin position="257"/>
        <end position="279"/>
    </location>
</feature>
<feature type="region of interest" description="Leucine-zipper" evidence="3">
    <location>
        <begin position="283"/>
        <end position="297"/>
    </location>
</feature>
<feature type="compositionally biased region" description="Gly residues" evidence="4">
    <location>
        <begin position="17"/>
        <end position="28"/>
    </location>
</feature>
<feature type="compositionally biased region" description="Low complexity" evidence="4">
    <location>
        <begin position="29"/>
        <end position="38"/>
    </location>
</feature>
<feature type="compositionally biased region" description="Low complexity" evidence="4">
    <location>
        <begin position="71"/>
        <end position="80"/>
    </location>
</feature>
<feature type="compositionally biased region" description="Low complexity" evidence="4">
    <location>
        <begin position="88"/>
        <end position="100"/>
    </location>
</feature>
<feature type="compositionally biased region" description="Pro residues" evidence="4">
    <location>
        <begin position="129"/>
        <end position="153"/>
    </location>
</feature>
<feature type="compositionally biased region" description="Low complexity" evidence="4">
    <location>
        <begin position="166"/>
        <end position="176"/>
    </location>
</feature>
<feature type="compositionally biased region" description="Basic and acidic residues" evidence="4">
    <location>
        <begin position="221"/>
        <end position="236"/>
    </location>
</feature>
<feature type="modified residue" description="Phosphoserine" evidence="2">
    <location>
        <position position="86"/>
    </location>
</feature>
<reference key="1">
    <citation type="submission" date="2005-10" db="EMBL/GenBank/DDBJ databases">
        <authorList>
            <consortium name="NIH - Mammalian Gene Collection (MGC) project"/>
        </authorList>
    </citation>
    <scope>NUCLEOTIDE SEQUENCE [LARGE SCALE MRNA]</scope>
    <source>
        <strain>Hereford</strain>
        <tissue>Ascending colon</tissue>
    </source>
</reference>